<sequence>MKIWVDADACPVLVKQILFKAAQRTQVEMTLVANQHIPVPPDKNITSIQVQSGFDMADDYIVEQCVANDLVITADIPLAAEVIAKGAHALNPRGELYTKESIGSILNIRDFMDTMRSSGVQTGGPGAYGNKEKQAFANNLDRLLAQR</sequence>
<dbReference type="EMBL" id="CP000388">
    <property type="protein sequence ID" value="ABG39844.1"/>
    <property type="molecule type" value="Genomic_DNA"/>
</dbReference>
<dbReference type="RefSeq" id="WP_011574166.1">
    <property type="nucleotide sequence ID" value="NC_008228.1"/>
</dbReference>
<dbReference type="STRING" id="342610.Patl_1318"/>
<dbReference type="KEGG" id="pat:Patl_1318"/>
<dbReference type="eggNOG" id="COG1671">
    <property type="taxonomic scope" value="Bacteria"/>
</dbReference>
<dbReference type="HOGENOM" id="CLU_106619_2_1_6"/>
<dbReference type="OrthoDB" id="9798918at2"/>
<dbReference type="Proteomes" id="UP000001981">
    <property type="component" value="Chromosome"/>
</dbReference>
<dbReference type="CDD" id="cd18720">
    <property type="entry name" value="PIN_YqxD-like"/>
    <property type="match status" value="1"/>
</dbReference>
<dbReference type="HAMAP" id="MF_00489">
    <property type="entry name" value="UPF0178"/>
    <property type="match status" value="1"/>
</dbReference>
<dbReference type="InterPro" id="IPR003791">
    <property type="entry name" value="UPF0178"/>
</dbReference>
<dbReference type="NCBIfam" id="NF001095">
    <property type="entry name" value="PRK00124.1"/>
    <property type="match status" value="1"/>
</dbReference>
<dbReference type="PANTHER" id="PTHR35146">
    <property type="entry name" value="UPF0178 PROTEIN YAII"/>
    <property type="match status" value="1"/>
</dbReference>
<dbReference type="PANTHER" id="PTHR35146:SF1">
    <property type="entry name" value="UPF0178 PROTEIN YAII"/>
    <property type="match status" value="1"/>
</dbReference>
<dbReference type="Pfam" id="PF02639">
    <property type="entry name" value="DUF188"/>
    <property type="match status" value="1"/>
</dbReference>
<accession>Q15W94</accession>
<comment type="similarity">
    <text evidence="1">Belongs to the UPF0178 family.</text>
</comment>
<reference key="1">
    <citation type="submission" date="2006-06" db="EMBL/GenBank/DDBJ databases">
        <title>Complete sequence of Pseudoalteromonas atlantica T6c.</title>
        <authorList>
            <consortium name="US DOE Joint Genome Institute"/>
            <person name="Copeland A."/>
            <person name="Lucas S."/>
            <person name="Lapidus A."/>
            <person name="Barry K."/>
            <person name="Detter J.C."/>
            <person name="Glavina del Rio T."/>
            <person name="Hammon N."/>
            <person name="Israni S."/>
            <person name="Dalin E."/>
            <person name="Tice H."/>
            <person name="Pitluck S."/>
            <person name="Saunders E."/>
            <person name="Brettin T."/>
            <person name="Bruce D."/>
            <person name="Han C."/>
            <person name="Tapia R."/>
            <person name="Gilna P."/>
            <person name="Schmutz J."/>
            <person name="Larimer F."/>
            <person name="Land M."/>
            <person name="Hauser L."/>
            <person name="Kyrpides N."/>
            <person name="Kim E."/>
            <person name="Karls A.C."/>
            <person name="Bartlett D."/>
            <person name="Higgins B.P."/>
            <person name="Richardson P."/>
        </authorList>
    </citation>
    <scope>NUCLEOTIDE SEQUENCE [LARGE SCALE GENOMIC DNA]</scope>
    <source>
        <strain>T6c / ATCC BAA-1087</strain>
    </source>
</reference>
<proteinExistence type="inferred from homology"/>
<feature type="chain" id="PRO_1000014431" description="UPF0178 protein Patl_1318">
    <location>
        <begin position="1"/>
        <end position="147"/>
    </location>
</feature>
<name>Y1318_PSEA6</name>
<organism>
    <name type="scientific">Pseudoalteromonas atlantica (strain T6c / ATCC BAA-1087)</name>
    <dbReference type="NCBI Taxonomy" id="3042615"/>
    <lineage>
        <taxon>Bacteria</taxon>
        <taxon>Pseudomonadati</taxon>
        <taxon>Pseudomonadota</taxon>
        <taxon>Gammaproteobacteria</taxon>
        <taxon>Alteromonadales</taxon>
        <taxon>Alteromonadaceae</taxon>
        <taxon>Paraglaciecola</taxon>
    </lineage>
</organism>
<evidence type="ECO:0000255" key="1">
    <source>
        <dbReference type="HAMAP-Rule" id="MF_00489"/>
    </source>
</evidence>
<gene>
    <name type="ordered locus">Patl_1318</name>
</gene>
<protein>
    <recommendedName>
        <fullName evidence="1">UPF0178 protein Patl_1318</fullName>
    </recommendedName>
</protein>